<dbReference type="EMBL" id="AB168803">
    <property type="protein sequence ID" value="BAE00909.1"/>
    <property type="molecule type" value="mRNA"/>
</dbReference>
<dbReference type="RefSeq" id="NP_001271757.1">
    <property type="nucleotide sequence ID" value="NM_001284828.1"/>
</dbReference>
<dbReference type="RefSeq" id="XP_045237183.1">
    <property type="nucleotide sequence ID" value="XM_045381248.2"/>
</dbReference>
<dbReference type="SMR" id="Q4R7L3"/>
<dbReference type="STRING" id="9541.ENSMFAP00000036504"/>
<dbReference type="Ensembl" id="ENSMFAT00000010750.2">
    <property type="protein sequence ID" value="ENSMFAP00000036504.1"/>
    <property type="gene ID" value="ENSMFAG00000034580.2"/>
</dbReference>
<dbReference type="GeneID" id="101864886"/>
<dbReference type="VEuPathDB" id="HostDB:ENSMFAG00000034580"/>
<dbReference type="eggNOG" id="KOG0727">
    <property type="taxonomic scope" value="Eukaryota"/>
</dbReference>
<dbReference type="GeneTree" id="ENSGT01020000230346"/>
<dbReference type="OrthoDB" id="10255768at2759"/>
<dbReference type="Proteomes" id="UP000233100">
    <property type="component" value="Chromosome 19"/>
</dbReference>
<dbReference type="Bgee" id="ENSMFAG00000034580">
    <property type="expression patterns" value="Expressed in skeletal muscle tissue and 13 other cell types or tissues"/>
</dbReference>
<dbReference type="GO" id="GO:0036064">
    <property type="term" value="C:ciliary basal body"/>
    <property type="evidence" value="ECO:0007669"/>
    <property type="project" value="Ensembl"/>
</dbReference>
<dbReference type="GO" id="GO:0005829">
    <property type="term" value="C:cytosol"/>
    <property type="evidence" value="ECO:0007669"/>
    <property type="project" value="Ensembl"/>
</dbReference>
<dbReference type="GO" id="GO:0005654">
    <property type="term" value="C:nucleoplasm"/>
    <property type="evidence" value="ECO:0007669"/>
    <property type="project" value="Ensembl"/>
</dbReference>
<dbReference type="GO" id="GO:0022624">
    <property type="term" value="C:proteasome accessory complex"/>
    <property type="evidence" value="ECO:0000250"/>
    <property type="project" value="UniProtKB"/>
</dbReference>
<dbReference type="GO" id="GO:0005524">
    <property type="term" value="F:ATP binding"/>
    <property type="evidence" value="ECO:0007669"/>
    <property type="project" value="UniProtKB-KW"/>
</dbReference>
<dbReference type="GO" id="GO:0016887">
    <property type="term" value="F:ATP hydrolysis activity"/>
    <property type="evidence" value="ECO:0007669"/>
    <property type="project" value="InterPro"/>
</dbReference>
<dbReference type="GO" id="GO:0001824">
    <property type="term" value="P:blastocyst development"/>
    <property type="evidence" value="ECO:0007669"/>
    <property type="project" value="Ensembl"/>
</dbReference>
<dbReference type="CDD" id="cd19502">
    <property type="entry name" value="RecA-like_PAN_like"/>
    <property type="match status" value="1"/>
</dbReference>
<dbReference type="FunFam" id="1.10.8.60:FF:000018">
    <property type="entry name" value="26S protease regulatory subunit 6B"/>
    <property type="match status" value="1"/>
</dbReference>
<dbReference type="FunFam" id="2.40.50.140:FF:000046">
    <property type="entry name" value="26S protease regulatory subunit 6B"/>
    <property type="match status" value="1"/>
</dbReference>
<dbReference type="FunFam" id="3.40.50.300:FF:000033">
    <property type="entry name" value="26S protease regulatory subunit 6B"/>
    <property type="match status" value="1"/>
</dbReference>
<dbReference type="Gene3D" id="1.10.8.60">
    <property type="match status" value="1"/>
</dbReference>
<dbReference type="Gene3D" id="2.40.50.140">
    <property type="entry name" value="Nucleic acid-binding proteins"/>
    <property type="match status" value="1"/>
</dbReference>
<dbReference type="Gene3D" id="3.40.50.300">
    <property type="entry name" value="P-loop containing nucleotide triphosphate hydrolases"/>
    <property type="match status" value="1"/>
</dbReference>
<dbReference type="InterPro" id="IPR050221">
    <property type="entry name" value="26S_Proteasome_ATPase"/>
</dbReference>
<dbReference type="InterPro" id="IPR003593">
    <property type="entry name" value="AAA+_ATPase"/>
</dbReference>
<dbReference type="InterPro" id="IPR041569">
    <property type="entry name" value="AAA_lid_3"/>
</dbReference>
<dbReference type="InterPro" id="IPR003959">
    <property type="entry name" value="ATPase_AAA_core"/>
</dbReference>
<dbReference type="InterPro" id="IPR003960">
    <property type="entry name" value="ATPase_AAA_CS"/>
</dbReference>
<dbReference type="InterPro" id="IPR012340">
    <property type="entry name" value="NA-bd_OB-fold"/>
</dbReference>
<dbReference type="InterPro" id="IPR027417">
    <property type="entry name" value="P-loop_NTPase"/>
</dbReference>
<dbReference type="InterPro" id="IPR032501">
    <property type="entry name" value="Prot_ATP_ID_OB_2nd"/>
</dbReference>
<dbReference type="PANTHER" id="PTHR23073">
    <property type="entry name" value="26S PROTEASOME REGULATORY SUBUNIT"/>
    <property type="match status" value="1"/>
</dbReference>
<dbReference type="Pfam" id="PF00004">
    <property type="entry name" value="AAA"/>
    <property type="match status" value="1"/>
</dbReference>
<dbReference type="Pfam" id="PF17862">
    <property type="entry name" value="AAA_lid_3"/>
    <property type="match status" value="1"/>
</dbReference>
<dbReference type="Pfam" id="PF16450">
    <property type="entry name" value="Prot_ATP_ID_OB_C"/>
    <property type="match status" value="1"/>
</dbReference>
<dbReference type="SMART" id="SM00382">
    <property type="entry name" value="AAA"/>
    <property type="match status" value="1"/>
</dbReference>
<dbReference type="SUPFAM" id="SSF52540">
    <property type="entry name" value="P-loop containing nucleoside triphosphate hydrolases"/>
    <property type="match status" value="1"/>
</dbReference>
<dbReference type="PROSITE" id="PS00674">
    <property type="entry name" value="AAA"/>
    <property type="match status" value="1"/>
</dbReference>
<feature type="chain" id="PRO_0000249770" description="26S proteasome regulatory subunit 6B">
    <location>
        <begin position="1"/>
        <end position="418"/>
    </location>
</feature>
<feature type="binding site" evidence="2">
    <location>
        <begin position="206"/>
        <end position="213"/>
    </location>
    <ligand>
        <name>ATP</name>
        <dbReference type="ChEBI" id="CHEBI:30616"/>
    </ligand>
</feature>
<feature type="modified residue" description="N-acetylmethionine" evidence="1">
    <location>
        <position position="1"/>
    </location>
</feature>
<feature type="modified residue" description="Phosphoserine" evidence="1">
    <location>
        <position position="21"/>
    </location>
</feature>
<feature type="modified residue" description="Phosphothreonine" evidence="1">
    <location>
        <position position="25"/>
    </location>
</feature>
<feature type="modified residue" description="Phosphoserine" evidence="1">
    <location>
        <position position="28"/>
    </location>
</feature>
<feature type="modified residue" description="N6-acetyllysine" evidence="1">
    <location>
        <position position="397"/>
    </location>
</feature>
<feature type="modified residue" description="N6-acetyllysine" evidence="1">
    <location>
        <position position="401"/>
    </location>
</feature>
<sequence length="418" mass="47366">MEEIGILVEKAQDEIPALSVSRPQTGLSFLGPEPEDLEDLYSRYKKLQQELEFLEVQEEYIKDEQKNLKKEFLHAQEEVKRIQSIPLVIGQFLEAVDQNTAIVGSTTGSNYYVRILSTIDRELLKPNASVALHKHSNALVDVLPPEADSSIMMLTSDQKPDVMYADIGGMDIQKQEVREAVELPLTHFELYKQIGIDPPRGVLMYGPPGCGKTMLAKAVAHHTTAAFIRVVGSEFVQKYLGEGPRMVRDVFRLAKENAPAIIFIDEIDAIATKRFDAQTGADREVQRILLELLNQMDGFDQNVNVKVIMATNRADTLDPALLRPGRLDRKIEFPLPDRRQKRLIFSTITSKMNLSEEVDLEDYVARPDKISGADINSICQESGMLAVRENRYIVLAKDFEKAYKTVIKKDEQEHEFYK</sequence>
<keyword id="KW-0007">Acetylation</keyword>
<keyword id="KW-0067">ATP-binding</keyword>
<keyword id="KW-0963">Cytoplasm</keyword>
<keyword id="KW-0547">Nucleotide-binding</keyword>
<keyword id="KW-0539">Nucleus</keyword>
<keyword id="KW-0597">Phosphoprotein</keyword>
<keyword id="KW-0647">Proteasome</keyword>
<keyword id="KW-1185">Reference proteome</keyword>
<reference key="1">
    <citation type="submission" date="2005-06" db="EMBL/GenBank/DDBJ databases">
        <title>DNA sequences of macaque genes expressed in brain or testis and its evolutionary implications.</title>
        <authorList>
            <consortium name="International consortium for macaque cDNA sequencing and analysis"/>
        </authorList>
    </citation>
    <scope>NUCLEOTIDE SEQUENCE [LARGE SCALE MRNA]</scope>
    <source>
        <tissue>Testis</tissue>
    </source>
</reference>
<evidence type="ECO:0000250" key="1">
    <source>
        <dbReference type="UniProtKB" id="P43686"/>
    </source>
</evidence>
<evidence type="ECO:0000255" key="2"/>
<evidence type="ECO:0000305" key="3"/>
<name>PRS6B_MACFA</name>
<proteinExistence type="evidence at transcript level"/>
<gene>
    <name type="primary">PSMC4</name>
    <name type="ORF">QtsA-14940</name>
</gene>
<protein>
    <recommendedName>
        <fullName>26S proteasome regulatory subunit 6B</fullName>
    </recommendedName>
    <alternativeName>
        <fullName>26S proteasome AAA-ATPase subunit RPT3</fullName>
    </alternativeName>
    <alternativeName>
        <fullName>Proteasome 26S subunit ATPase 4</fullName>
    </alternativeName>
</protein>
<organism>
    <name type="scientific">Macaca fascicularis</name>
    <name type="common">Crab-eating macaque</name>
    <name type="synonym">Cynomolgus monkey</name>
    <dbReference type="NCBI Taxonomy" id="9541"/>
    <lineage>
        <taxon>Eukaryota</taxon>
        <taxon>Metazoa</taxon>
        <taxon>Chordata</taxon>
        <taxon>Craniata</taxon>
        <taxon>Vertebrata</taxon>
        <taxon>Euteleostomi</taxon>
        <taxon>Mammalia</taxon>
        <taxon>Eutheria</taxon>
        <taxon>Euarchontoglires</taxon>
        <taxon>Primates</taxon>
        <taxon>Haplorrhini</taxon>
        <taxon>Catarrhini</taxon>
        <taxon>Cercopithecidae</taxon>
        <taxon>Cercopithecinae</taxon>
        <taxon>Macaca</taxon>
    </lineage>
</organism>
<comment type="function">
    <text evidence="1">Component of the 26S proteasome, a multiprotein complex involved in the ATP-dependent degradation of ubiquitinated proteins. This complex plays a key role in the maintenance of protein homeostasis by removing misfolded or damaged proteins, which could impair cellular functions, and by removing proteins whose functions are no longer required. Therefore, the proteasome participates in numerous cellular processes, including cell cycle progression, apoptosis, or DNA damage repair. PSMC4 belongs to the heterohexameric ring of AAA (ATPases associated with diverse cellular activities) proteins that unfolds ubiquitinated target proteins that are concurrently translocated into a proteolytic chamber and degraded into peptides.</text>
</comment>
<comment type="subunit">
    <text evidence="1">Component of the 19S proteasome regulatory particle complex. The 26S proteasome consists of a 20S core particle (CP) and two 19S regulatory subunits (RP). The regulatory particle is made of a lid composed of 9 subunits, a base containing 6 ATPases including PSMC4 and few additional components. Interacts with NR1I3. Interacts with PAAF1. Interacts with TRIM5. Interacts with ZFAND1 (By similarity).</text>
</comment>
<comment type="subcellular location">
    <subcellularLocation>
        <location evidence="1">Cytoplasm</location>
    </subcellularLocation>
    <subcellularLocation>
        <location evidence="1">Nucleus</location>
    </subcellularLocation>
</comment>
<comment type="similarity">
    <text evidence="3">Belongs to the AAA ATPase family.</text>
</comment>
<accession>Q4R7L3</accession>